<protein>
    <recommendedName>
        <fullName>CDGSH iron-sulfur domain-containing protein 2 homolog</fullName>
    </recommendedName>
</protein>
<organism>
    <name type="scientific">Drosophila pseudoobscura pseudoobscura</name>
    <name type="common">Fruit fly</name>
    <dbReference type="NCBI Taxonomy" id="46245"/>
    <lineage>
        <taxon>Eukaryota</taxon>
        <taxon>Metazoa</taxon>
        <taxon>Ecdysozoa</taxon>
        <taxon>Arthropoda</taxon>
        <taxon>Hexapoda</taxon>
        <taxon>Insecta</taxon>
        <taxon>Pterygota</taxon>
        <taxon>Neoptera</taxon>
        <taxon>Endopterygota</taxon>
        <taxon>Diptera</taxon>
        <taxon>Brachycera</taxon>
        <taxon>Muscomorpha</taxon>
        <taxon>Ephydroidea</taxon>
        <taxon>Drosophilidae</taxon>
        <taxon>Drosophila</taxon>
        <taxon>Sophophora</taxon>
    </lineage>
</organism>
<reference key="1">
    <citation type="journal article" date="2005" name="Genome Res.">
        <title>Comparative genome sequencing of Drosophila pseudoobscura: chromosomal, gene, and cis-element evolution.</title>
        <authorList>
            <person name="Richards S."/>
            <person name="Liu Y."/>
            <person name="Bettencourt B.R."/>
            <person name="Hradecky P."/>
            <person name="Letovsky S."/>
            <person name="Nielsen R."/>
            <person name="Thornton K."/>
            <person name="Hubisz M.J."/>
            <person name="Chen R."/>
            <person name="Meisel R.P."/>
            <person name="Couronne O."/>
            <person name="Hua S."/>
            <person name="Smith M.A."/>
            <person name="Zhang P."/>
            <person name="Liu J."/>
            <person name="Bussemaker H.J."/>
            <person name="van Batenburg M.F."/>
            <person name="Howells S.L."/>
            <person name="Scherer S.E."/>
            <person name="Sodergren E."/>
            <person name="Matthews B.B."/>
            <person name="Crosby M.A."/>
            <person name="Schroeder A.J."/>
            <person name="Ortiz-Barrientos D."/>
            <person name="Rives C.M."/>
            <person name="Metzker M.L."/>
            <person name="Muzny D.M."/>
            <person name="Scott G."/>
            <person name="Steffen D."/>
            <person name="Wheeler D.A."/>
            <person name="Worley K.C."/>
            <person name="Havlak P."/>
            <person name="Durbin K.J."/>
            <person name="Egan A."/>
            <person name="Gill R."/>
            <person name="Hume J."/>
            <person name="Morgan M.B."/>
            <person name="Miner G."/>
            <person name="Hamilton C."/>
            <person name="Huang Y."/>
            <person name="Waldron L."/>
            <person name="Verduzco D."/>
            <person name="Clerc-Blankenburg K.P."/>
            <person name="Dubchak I."/>
            <person name="Noor M.A.F."/>
            <person name="Anderson W."/>
            <person name="White K.P."/>
            <person name="Clark A.G."/>
            <person name="Schaeffer S.W."/>
            <person name="Gelbart W.M."/>
            <person name="Weinstock G.M."/>
            <person name="Gibbs R.A."/>
        </authorList>
    </citation>
    <scope>NUCLEOTIDE SEQUENCE [LARGE SCALE GENOMIC DNA]</scope>
    <source>
        <strain>MV2-25 / Tucson 14011-0121.94</strain>
    </source>
</reference>
<comment type="cofactor">
    <cofactor evidence="1">
        <name>[2Fe-2S] cluster</name>
        <dbReference type="ChEBI" id="CHEBI:190135"/>
    </cofactor>
    <text evidence="1">Binds 1 [2Fe-2S] cluster.</text>
</comment>
<comment type="subcellular location">
    <subcellularLocation>
        <location evidence="4">Endoplasmic reticulum membrane</location>
        <topology evidence="4">Single-pass membrane protein</topology>
    </subcellularLocation>
</comment>
<comment type="similarity">
    <text evidence="4">Belongs to the CISD protein family. CISD2 subfamily.</text>
</comment>
<dbReference type="EMBL" id="CM000070">
    <property type="protein sequence ID" value="EAL26868.2"/>
    <property type="molecule type" value="Genomic_DNA"/>
</dbReference>
<dbReference type="RefSeq" id="XP_001357734.2">
    <property type="nucleotide sequence ID" value="XM_001357697.3"/>
</dbReference>
<dbReference type="SMR" id="Q29BX8"/>
<dbReference type="FunCoup" id="Q29BX8">
    <property type="interactions" value="1435"/>
</dbReference>
<dbReference type="STRING" id="46245.Q29BX8"/>
<dbReference type="EnsemblMetazoa" id="FBtr0284743">
    <property type="protein sequence ID" value="FBpp0283181"/>
    <property type="gene ID" value="FBgn0073133"/>
</dbReference>
<dbReference type="GeneID" id="4800463"/>
<dbReference type="KEGG" id="dpo:4800463"/>
<dbReference type="CTD" id="493856"/>
<dbReference type="eggNOG" id="KOG3461">
    <property type="taxonomic scope" value="Eukaryota"/>
</dbReference>
<dbReference type="HOGENOM" id="CLU_132293_1_0_1"/>
<dbReference type="InParanoid" id="Q29BX8"/>
<dbReference type="OMA" id="QIRKHEP"/>
<dbReference type="Proteomes" id="UP000001819">
    <property type="component" value="Chromosome 2"/>
</dbReference>
<dbReference type="Bgee" id="FBgn0073133">
    <property type="expression patterns" value="Expressed in insect adult head and 2 other cell types or tissues"/>
</dbReference>
<dbReference type="GO" id="GO:0005789">
    <property type="term" value="C:endoplasmic reticulum membrane"/>
    <property type="evidence" value="ECO:0007669"/>
    <property type="project" value="UniProtKB-SubCell"/>
</dbReference>
<dbReference type="GO" id="GO:0005741">
    <property type="term" value="C:mitochondrial outer membrane"/>
    <property type="evidence" value="ECO:0007669"/>
    <property type="project" value="TreeGrafter"/>
</dbReference>
<dbReference type="GO" id="GO:0051537">
    <property type="term" value="F:2 iron, 2 sulfur cluster binding"/>
    <property type="evidence" value="ECO:0007669"/>
    <property type="project" value="UniProtKB-KW"/>
</dbReference>
<dbReference type="GO" id="GO:0046872">
    <property type="term" value="F:metal ion binding"/>
    <property type="evidence" value="ECO:0007669"/>
    <property type="project" value="UniProtKB-KW"/>
</dbReference>
<dbReference type="GO" id="GO:0010506">
    <property type="term" value="P:regulation of autophagy"/>
    <property type="evidence" value="ECO:0007669"/>
    <property type="project" value="InterPro"/>
</dbReference>
<dbReference type="Gene3D" id="3.40.5.90">
    <property type="entry name" value="CDGSH iron-sulfur domain, mitoNEET-type"/>
    <property type="match status" value="1"/>
</dbReference>
<dbReference type="InterPro" id="IPR045131">
    <property type="entry name" value="CISD1/2"/>
</dbReference>
<dbReference type="InterPro" id="IPR018967">
    <property type="entry name" value="FeS-contain_CDGSH-typ"/>
</dbReference>
<dbReference type="InterPro" id="IPR019610">
    <property type="entry name" value="FeS-contain_mitoNEET_N"/>
</dbReference>
<dbReference type="InterPro" id="IPR042216">
    <property type="entry name" value="MitoNEET_CISD"/>
</dbReference>
<dbReference type="PANTHER" id="PTHR13680">
    <property type="entry name" value="CDGSH IRON-SULFUR DOMAIN-CONTAINING PROTEIN 1"/>
    <property type="match status" value="1"/>
</dbReference>
<dbReference type="PANTHER" id="PTHR13680:SF5">
    <property type="entry name" value="CDGSH IRON-SULFUR DOMAIN-CONTAINING PROTEIN 1"/>
    <property type="match status" value="1"/>
</dbReference>
<dbReference type="Pfam" id="PF10660">
    <property type="entry name" value="MitoNEET_N"/>
    <property type="match status" value="1"/>
</dbReference>
<dbReference type="Pfam" id="PF09360">
    <property type="entry name" value="zf-CDGSH"/>
    <property type="match status" value="1"/>
</dbReference>
<dbReference type="SMART" id="SM00704">
    <property type="entry name" value="ZnF_CDGSH"/>
    <property type="match status" value="1"/>
</dbReference>
<gene>
    <name evidence="2" type="primary">Cisd2</name>
    <name type="ORF">GA13095</name>
</gene>
<keyword id="KW-0001">2Fe-2S</keyword>
<keyword id="KW-0256">Endoplasmic reticulum</keyword>
<keyword id="KW-0408">Iron</keyword>
<keyword id="KW-0411">Iron-sulfur</keyword>
<keyword id="KW-0472">Membrane</keyword>
<keyword id="KW-0479">Metal-binding</keyword>
<keyword id="KW-1185">Reference proteome</keyword>
<keyword id="KW-0812">Transmembrane</keyword>
<keyword id="KW-1133">Transmembrane helix</keyword>
<feature type="chain" id="PRO_0000316011" description="CDGSH iron-sulfur domain-containing protein 2 homolog">
    <location>
        <begin position="1"/>
        <end position="132"/>
    </location>
</feature>
<feature type="topological domain" description="Lumenal" evidence="3">
    <location>
        <begin position="1"/>
        <end position="35"/>
    </location>
</feature>
<feature type="transmembrane region" description="Helical" evidence="3">
    <location>
        <begin position="36"/>
        <end position="58"/>
    </location>
</feature>
<feature type="topological domain" description="Cytoplasmic" evidence="3">
    <location>
        <begin position="59"/>
        <end position="132"/>
    </location>
</feature>
<feature type="binding site" evidence="1">
    <location>
        <position position="98"/>
    </location>
    <ligand>
        <name>[2Fe-2S] cluster</name>
        <dbReference type="ChEBI" id="CHEBI:190135"/>
    </ligand>
</feature>
<feature type="binding site" evidence="1">
    <location>
        <position position="100"/>
    </location>
    <ligand>
        <name>[2Fe-2S] cluster</name>
        <dbReference type="ChEBI" id="CHEBI:190135"/>
    </ligand>
</feature>
<feature type="binding site" evidence="1">
    <location>
        <position position="109"/>
    </location>
    <ligand>
        <name>[2Fe-2S] cluster</name>
        <dbReference type="ChEBI" id="CHEBI:190135"/>
    </ligand>
</feature>
<feature type="binding site" evidence="1">
    <location>
        <position position="113"/>
    </location>
    <ligand>
        <name>[2Fe-2S] cluster</name>
        <dbReference type="ChEBI" id="CHEBI:190135"/>
    </ligand>
</feature>
<evidence type="ECO:0000250" key="1"/>
<evidence type="ECO:0000250" key="2">
    <source>
        <dbReference type="UniProtKB" id="Q9VAM6"/>
    </source>
</evidence>
<evidence type="ECO:0000255" key="3"/>
<evidence type="ECO:0000305" key="4"/>
<sequence>MEPISHVVKSSLPNYLSSLPIPDSFGGWFKLSFKDWLALIPPTVVVAGLGYTTYLAFCPAARCAGKDSGRCNSSIRKNEAKVVTMVDVEDIAGQAAFCRCWKTKNWPYCDGSHGEHNKQTGDNVGPVVVKKK</sequence>
<name>CISD2_DROPS</name>
<accession>Q29BX8</accession>
<proteinExistence type="inferred from homology"/>